<name>EFTU_THEAB</name>
<protein>
    <recommendedName>
        <fullName evidence="2">Elongation factor Tu</fullName>
        <shortName evidence="2">EF-Tu</shortName>
        <ecNumber evidence="2">3.6.5.3</ecNumber>
    </recommendedName>
</protein>
<proteinExistence type="inferred from homology"/>
<gene>
    <name evidence="2" type="primary">tuf</name>
    <name type="ordered locus">THA_1213</name>
</gene>
<organism>
    <name type="scientific">Thermosipho africanus (strain TCF52B)</name>
    <dbReference type="NCBI Taxonomy" id="484019"/>
    <lineage>
        <taxon>Bacteria</taxon>
        <taxon>Thermotogati</taxon>
        <taxon>Thermotogota</taxon>
        <taxon>Thermotogae</taxon>
        <taxon>Thermotogales</taxon>
        <taxon>Fervidobacteriaceae</taxon>
        <taxon>Thermosipho</taxon>
    </lineage>
</organism>
<accession>B7IHU4</accession>
<feature type="chain" id="PRO_1000201419" description="Elongation factor Tu">
    <location>
        <begin position="1"/>
        <end position="400"/>
    </location>
</feature>
<feature type="domain" description="tr-type G">
    <location>
        <begin position="10"/>
        <end position="208"/>
    </location>
</feature>
<feature type="region of interest" description="G1" evidence="1">
    <location>
        <begin position="19"/>
        <end position="26"/>
    </location>
</feature>
<feature type="region of interest" description="G2" evidence="1">
    <location>
        <begin position="60"/>
        <end position="64"/>
    </location>
</feature>
<feature type="region of interest" description="G3" evidence="1">
    <location>
        <begin position="81"/>
        <end position="84"/>
    </location>
</feature>
<feature type="region of interest" description="G4" evidence="1">
    <location>
        <begin position="136"/>
        <end position="139"/>
    </location>
</feature>
<feature type="region of interest" description="G5" evidence="1">
    <location>
        <begin position="174"/>
        <end position="176"/>
    </location>
</feature>
<feature type="binding site" evidence="2">
    <location>
        <begin position="19"/>
        <end position="26"/>
    </location>
    <ligand>
        <name>GTP</name>
        <dbReference type="ChEBI" id="CHEBI:37565"/>
    </ligand>
</feature>
<feature type="binding site" evidence="2">
    <location>
        <position position="26"/>
    </location>
    <ligand>
        <name>Mg(2+)</name>
        <dbReference type="ChEBI" id="CHEBI:18420"/>
    </ligand>
</feature>
<feature type="binding site" evidence="2">
    <location>
        <begin position="81"/>
        <end position="85"/>
    </location>
    <ligand>
        <name>GTP</name>
        <dbReference type="ChEBI" id="CHEBI:37565"/>
    </ligand>
</feature>
<feature type="binding site" evidence="2">
    <location>
        <begin position="136"/>
        <end position="139"/>
    </location>
    <ligand>
        <name>GTP</name>
        <dbReference type="ChEBI" id="CHEBI:37565"/>
    </ligand>
</feature>
<comment type="function">
    <text evidence="2">GTP hydrolase that promotes the GTP-dependent binding of aminoacyl-tRNA to the A-site of ribosomes during protein biosynthesis.</text>
</comment>
<comment type="catalytic activity">
    <reaction evidence="2">
        <text>GTP + H2O = GDP + phosphate + H(+)</text>
        <dbReference type="Rhea" id="RHEA:19669"/>
        <dbReference type="ChEBI" id="CHEBI:15377"/>
        <dbReference type="ChEBI" id="CHEBI:15378"/>
        <dbReference type="ChEBI" id="CHEBI:37565"/>
        <dbReference type="ChEBI" id="CHEBI:43474"/>
        <dbReference type="ChEBI" id="CHEBI:58189"/>
        <dbReference type="EC" id="3.6.5.3"/>
    </reaction>
    <physiologicalReaction direction="left-to-right" evidence="2">
        <dbReference type="Rhea" id="RHEA:19670"/>
    </physiologicalReaction>
</comment>
<comment type="subunit">
    <text evidence="2">Monomer.</text>
</comment>
<comment type="subcellular location">
    <subcellularLocation>
        <location evidence="2">Cytoplasm</location>
    </subcellularLocation>
</comment>
<comment type="similarity">
    <text evidence="2">Belongs to the TRAFAC class translation factor GTPase superfamily. Classic translation factor GTPase family. EF-Tu/EF-1A subfamily.</text>
</comment>
<dbReference type="EC" id="3.6.5.3" evidence="2"/>
<dbReference type="EMBL" id="CP001185">
    <property type="protein sequence ID" value="ACJ75658.1"/>
    <property type="molecule type" value="Genomic_DNA"/>
</dbReference>
<dbReference type="RefSeq" id="WP_004101434.1">
    <property type="nucleotide sequence ID" value="NC_011653.1"/>
</dbReference>
<dbReference type="SMR" id="B7IHU4"/>
<dbReference type="STRING" id="484019.THA_1213"/>
<dbReference type="KEGG" id="taf:THA_1213"/>
<dbReference type="eggNOG" id="COG0050">
    <property type="taxonomic scope" value="Bacteria"/>
</dbReference>
<dbReference type="HOGENOM" id="CLU_007265_0_1_0"/>
<dbReference type="OrthoDB" id="9804504at2"/>
<dbReference type="Proteomes" id="UP000002453">
    <property type="component" value="Chromosome"/>
</dbReference>
<dbReference type="GO" id="GO:0005829">
    <property type="term" value="C:cytosol"/>
    <property type="evidence" value="ECO:0007669"/>
    <property type="project" value="TreeGrafter"/>
</dbReference>
<dbReference type="GO" id="GO:0005525">
    <property type="term" value="F:GTP binding"/>
    <property type="evidence" value="ECO:0007669"/>
    <property type="project" value="UniProtKB-UniRule"/>
</dbReference>
<dbReference type="GO" id="GO:0003924">
    <property type="term" value="F:GTPase activity"/>
    <property type="evidence" value="ECO:0007669"/>
    <property type="project" value="InterPro"/>
</dbReference>
<dbReference type="GO" id="GO:0003746">
    <property type="term" value="F:translation elongation factor activity"/>
    <property type="evidence" value="ECO:0007669"/>
    <property type="project" value="UniProtKB-UniRule"/>
</dbReference>
<dbReference type="CDD" id="cd01884">
    <property type="entry name" value="EF_Tu"/>
    <property type="match status" value="1"/>
</dbReference>
<dbReference type="CDD" id="cd03697">
    <property type="entry name" value="EFTU_II"/>
    <property type="match status" value="1"/>
</dbReference>
<dbReference type="CDD" id="cd03707">
    <property type="entry name" value="EFTU_III"/>
    <property type="match status" value="1"/>
</dbReference>
<dbReference type="FunFam" id="2.40.30.10:FF:000001">
    <property type="entry name" value="Elongation factor Tu"/>
    <property type="match status" value="1"/>
</dbReference>
<dbReference type="FunFam" id="3.40.50.300:FF:000003">
    <property type="entry name" value="Elongation factor Tu"/>
    <property type="match status" value="1"/>
</dbReference>
<dbReference type="Gene3D" id="3.40.50.300">
    <property type="entry name" value="P-loop containing nucleotide triphosphate hydrolases"/>
    <property type="match status" value="1"/>
</dbReference>
<dbReference type="Gene3D" id="2.40.30.10">
    <property type="entry name" value="Translation factors"/>
    <property type="match status" value="2"/>
</dbReference>
<dbReference type="HAMAP" id="MF_00118_B">
    <property type="entry name" value="EF_Tu_B"/>
    <property type="match status" value="1"/>
</dbReference>
<dbReference type="InterPro" id="IPR041709">
    <property type="entry name" value="EF-Tu_GTP-bd"/>
</dbReference>
<dbReference type="InterPro" id="IPR050055">
    <property type="entry name" value="EF-Tu_GTPase"/>
</dbReference>
<dbReference type="InterPro" id="IPR004161">
    <property type="entry name" value="EFTu-like_2"/>
</dbReference>
<dbReference type="InterPro" id="IPR033720">
    <property type="entry name" value="EFTU_2"/>
</dbReference>
<dbReference type="InterPro" id="IPR031157">
    <property type="entry name" value="G_TR_CS"/>
</dbReference>
<dbReference type="InterPro" id="IPR027417">
    <property type="entry name" value="P-loop_NTPase"/>
</dbReference>
<dbReference type="InterPro" id="IPR005225">
    <property type="entry name" value="Small_GTP-bd"/>
</dbReference>
<dbReference type="InterPro" id="IPR000795">
    <property type="entry name" value="T_Tr_GTP-bd_dom"/>
</dbReference>
<dbReference type="InterPro" id="IPR009000">
    <property type="entry name" value="Transl_B-barrel_sf"/>
</dbReference>
<dbReference type="InterPro" id="IPR009001">
    <property type="entry name" value="Transl_elong_EF1A/Init_IF2_C"/>
</dbReference>
<dbReference type="InterPro" id="IPR004541">
    <property type="entry name" value="Transl_elong_EFTu/EF1A_bac/org"/>
</dbReference>
<dbReference type="InterPro" id="IPR004160">
    <property type="entry name" value="Transl_elong_EFTu/EF1A_C"/>
</dbReference>
<dbReference type="NCBIfam" id="TIGR00485">
    <property type="entry name" value="EF-Tu"/>
    <property type="match status" value="1"/>
</dbReference>
<dbReference type="NCBIfam" id="NF000766">
    <property type="entry name" value="PRK00049.1"/>
    <property type="match status" value="1"/>
</dbReference>
<dbReference type="NCBIfam" id="NF009372">
    <property type="entry name" value="PRK12735.1"/>
    <property type="match status" value="1"/>
</dbReference>
<dbReference type="NCBIfam" id="NF009373">
    <property type="entry name" value="PRK12736.1"/>
    <property type="match status" value="1"/>
</dbReference>
<dbReference type="NCBIfam" id="TIGR00231">
    <property type="entry name" value="small_GTP"/>
    <property type="match status" value="1"/>
</dbReference>
<dbReference type="PANTHER" id="PTHR43721:SF22">
    <property type="entry name" value="ELONGATION FACTOR TU, MITOCHONDRIAL"/>
    <property type="match status" value="1"/>
</dbReference>
<dbReference type="PANTHER" id="PTHR43721">
    <property type="entry name" value="ELONGATION FACTOR TU-RELATED"/>
    <property type="match status" value="1"/>
</dbReference>
<dbReference type="Pfam" id="PF00009">
    <property type="entry name" value="GTP_EFTU"/>
    <property type="match status" value="1"/>
</dbReference>
<dbReference type="Pfam" id="PF03144">
    <property type="entry name" value="GTP_EFTU_D2"/>
    <property type="match status" value="1"/>
</dbReference>
<dbReference type="Pfam" id="PF03143">
    <property type="entry name" value="GTP_EFTU_D3"/>
    <property type="match status" value="1"/>
</dbReference>
<dbReference type="PRINTS" id="PR00315">
    <property type="entry name" value="ELONGATNFCT"/>
</dbReference>
<dbReference type="SUPFAM" id="SSF50465">
    <property type="entry name" value="EF-Tu/eEF-1alpha/eIF2-gamma C-terminal domain"/>
    <property type="match status" value="1"/>
</dbReference>
<dbReference type="SUPFAM" id="SSF52540">
    <property type="entry name" value="P-loop containing nucleoside triphosphate hydrolases"/>
    <property type="match status" value="1"/>
</dbReference>
<dbReference type="SUPFAM" id="SSF50447">
    <property type="entry name" value="Translation proteins"/>
    <property type="match status" value="1"/>
</dbReference>
<dbReference type="PROSITE" id="PS00301">
    <property type="entry name" value="G_TR_1"/>
    <property type="match status" value="1"/>
</dbReference>
<dbReference type="PROSITE" id="PS51722">
    <property type="entry name" value="G_TR_2"/>
    <property type="match status" value="1"/>
</dbReference>
<keyword id="KW-0963">Cytoplasm</keyword>
<keyword id="KW-0251">Elongation factor</keyword>
<keyword id="KW-0342">GTP-binding</keyword>
<keyword id="KW-0378">Hydrolase</keyword>
<keyword id="KW-0460">Magnesium</keyword>
<keyword id="KW-0479">Metal-binding</keyword>
<keyword id="KW-0547">Nucleotide-binding</keyword>
<keyword id="KW-0648">Protein biosynthesis</keyword>
<keyword id="KW-1185">Reference proteome</keyword>
<sequence length="400" mass="44394">MAKEKFVRSKPHLNVGTIGHIDHGKTTLTAAITKYLSFFGRADYTPYEQIDKAPEEKERGITINISHIEYETETRHYAHIDCPGHADYIKNMITGAAQMDGAILVVAATDGPMPQTREHVLLARQVNVPAMIVFINKTDMVDDEELIDLVEMEVRELLNKYEFPGDDLPVVRGSALKAVEGPDDPNDPVYAPIKELLDTMDSYFPEPQRETDKPFLMPVEDVFSITGRGTVVTGRIERGVIRPGDEVEIIGMSYDIKKTVVTSVEMFRKILDEGLAGDNVGCLLRGIDKDEVERGQVLAKPGSITPHTTFKAQVYVLKKEEGGRHTPFQKGYKPQFFIRTADVTGELIDFPAGVEMVMPGDNVEMTIKLIYPVAIEEGMRFAIREGGRTVGAGVVTAIVE</sequence>
<evidence type="ECO:0000250" key="1"/>
<evidence type="ECO:0000255" key="2">
    <source>
        <dbReference type="HAMAP-Rule" id="MF_00118"/>
    </source>
</evidence>
<reference key="1">
    <citation type="journal article" date="2009" name="J. Bacteriol.">
        <title>The genome of Thermosipho africanus TCF52B: lateral genetic connections to the Firmicutes and Archaea.</title>
        <authorList>
            <person name="Nesboe C.L."/>
            <person name="Bapteste E."/>
            <person name="Curtis B."/>
            <person name="Dahle H."/>
            <person name="Lopez P."/>
            <person name="Macleod D."/>
            <person name="Dlutek M."/>
            <person name="Bowman S."/>
            <person name="Zhaxybayeva O."/>
            <person name="Birkeland N.-K."/>
            <person name="Doolittle W.F."/>
        </authorList>
    </citation>
    <scope>NUCLEOTIDE SEQUENCE [LARGE SCALE GENOMIC DNA]</scope>
    <source>
        <strain>TCF52B</strain>
    </source>
</reference>